<reference key="1">
    <citation type="journal article" date="2002" name="Science">
        <title>50 million years of genomic stasis in endosymbiotic bacteria.</title>
        <authorList>
            <person name="Tamas I."/>
            <person name="Klasson L."/>
            <person name="Canbaeck B."/>
            <person name="Naeslund A.K."/>
            <person name="Eriksson A.-S."/>
            <person name="Wernegreen J.J."/>
            <person name="Sandstroem J.P."/>
            <person name="Moran N.A."/>
            <person name="Andersson S.G.E."/>
        </authorList>
    </citation>
    <scope>NUCLEOTIDE SEQUENCE [LARGE SCALE GENOMIC DNA]</scope>
    <source>
        <strain>Sg</strain>
    </source>
</reference>
<proteinExistence type="inferred from homology"/>
<feature type="chain" id="PRO_0000163267" description="Ribosome maturation factor RimM">
    <location>
        <begin position="1"/>
        <end position="175"/>
    </location>
</feature>
<feature type="domain" description="PRC barrel" evidence="1">
    <location>
        <begin position="100"/>
        <end position="174"/>
    </location>
</feature>
<comment type="function">
    <text evidence="1">An accessory protein needed during the final step in the assembly of 30S ribosomal subunit, possibly for assembly of the head region. Essential for efficient processing of 16S rRNA. May be needed both before and after RbfA during the maturation of 16S rRNA. It has affinity for free ribosomal 30S subunits but not for 70S ribosomes.</text>
</comment>
<comment type="subunit">
    <text evidence="1">Binds ribosomal protein uS19.</text>
</comment>
<comment type="subcellular location">
    <subcellularLocation>
        <location evidence="1">Cytoplasm</location>
    </subcellularLocation>
</comment>
<comment type="domain">
    <text evidence="1">The PRC barrel domain binds ribosomal protein uS19.</text>
</comment>
<comment type="similarity">
    <text evidence="1">Belongs to the RimM family.</text>
</comment>
<sequence>MNIFLKKPLHPILIGKIGKAYGILGWVKFFSFTENKEKIFSYFPWFILKKKWEIIHVDKWKKHNNNFIIHIENILDRSTVSKFTNLEIFIDKSILPILKEDEYYWNDVIDCKVFNSRKEYLGKVINLIRNQNNDVLIIRNNLKKNNFKKIMIPFIHKKIVKYINVKHKIITVIWN</sequence>
<protein>
    <recommendedName>
        <fullName evidence="1">Ribosome maturation factor RimM</fullName>
    </recommendedName>
</protein>
<dbReference type="EMBL" id="AE013218">
    <property type="protein sequence ID" value="AAM67934.1"/>
    <property type="molecule type" value="Genomic_DNA"/>
</dbReference>
<dbReference type="SMR" id="Q8K9F5"/>
<dbReference type="STRING" id="198804.BUsg_382"/>
<dbReference type="KEGG" id="bas:BUsg_382"/>
<dbReference type="eggNOG" id="COG0806">
    <property type="taxonomic scope" value="Bacteria"/>
</dbReference>
<dbReference type="HOGENOM" id="CLU_077636_1_0_6"/>
<dbReference type="Proteomes" id="UP000000416">
    <property type="component" value="Chromosome"/>
</dbReference>
<dbReference type="GO" id="GO:0005737">
    <property type="term" value="C:cytoplasm"/>
    <property type="evidence" value="ECO:0007669"/>
    <property type="project" value="UniProtKB-SubCell"/>
</dbReference>
<dbReference type="GO" id="GO:0005840">
    <property type="term" value="C:ribosome"/>
    <property type="evidence" value="ECO:0007669"/>
    <property type="project" value="InterPro"/>
</dbReference>
<dbReference type="GO" id="GO:0043022">
    <property type="term" value="F:ribosome binding"/>
    <property type="evidence" value="ECO:0007669"/>
    <property type="project" value="InterPro"/>
</dbReference>
<dbReference type="GO" id="GO:0042274">
    <property type="term" value="P:ribosomal small subunit biogenesis"/>
    <property type="evidence" value="ECO:0007669"/>
    <property type="project" value="UniProtKB-UniRule"/>
</dbReference>
<dbReference type="GO" id="GO:0006364">
    <property type="term" value="P:rRNA processing"/>
    <property type="evidence" value="ECO:0007669"/>
    <property type="project" value="UniProtKB-UniRule"/>
</dbReference>
<dbReference type="Gene3D" id="2.30.30.240">
    <property type="entry name" value="PRC-barrel domain"/>
    <property type="match status" value="1"/>
</dbReference>
<dbReference type="Gene3D" id="2.40.30.60">
    <property type="entry name" value="RimM"/>
    <property type="match status" value="1"/>
</dbReference>
<dbReference type="HAMAP" id="MF_00014">
    <property type="entry name" value="Ribosome_mat_RimM"/>
    <property type="match status" value="1"/>
</dbReference>
<dbReference type="InterPro" id="IPR011033">
    <property type="entry name" value="PRC_barrel-like_sf"/>
</dbReference>
<dbReference type="InterPro" id="IPR056792">
    <property type="entry name" value="PRC_RimM"/>
</dbReference>
<dbReference type="InterPro" id="IPR011961">
    <property type="entry name" value="RimM"/>
</dbReference>
<dbReference type="InterPro" id="IPR002676">
    <property type="entry name" value="RimM_N"/>
</dbReference>
<dbReference type="InterPro" id="IPR036976">
    <property type="entry name" value="RimM_N_sf"/>
</dbReference>
<dbReference type="InterPro" id="IPR009000">
    <property type="entry name" value="Transl_B-barrel_sf"/>
</dbReference>
<dbReference type="NCBIfam" id="TIGR02273">
    <property type="entry name" value="16S_RimM"/>
    <property type="match status" value="1"/>
</dbReference>
<dbReference type="PANTHER" id="PTHR33692">
    <property type="entry name" value="RIBOSOME MATURATION FACTOR RIMM"/>
    <property type="match status" value="1"/>
</dbReference>
<dbReference type="PANTHER" id="PTHR33692:SF1">
    <property type="entry name" value="RIBOSOME MATURATION FACTOR RIMM"/>
    <property type="match status" value="1"/>
</dbReference>
<dbReference type="Pfam" id="PF24986">
    <property type="entry name" value="PRC_RimM"/>
    <property type="match status" value="1"/>
</dbReference>
<dbReference type="Pfam" id="PF01782">
    <property type="entry name" value="RimM"/>
    <property type="match status" value="1"/>
</dbReference>
<dbReference type="SUPFAM" id="SSF50346">
    <property type="entry name" value="PRC-barrel domain"/>
    <property type="match status" value="1"/>
</dbReference>
<dbReference type="SUPFAM" id="SSF50447">
    <property type="entry name" value="Translation proteins"/>
    <property type="match status" value="1"/>
</dbReference>
<keyword id="KW-0143">Chaperone</keyword>
<keyword id="KW-0963">Cytoplasm</keyword>
<keyword id="KW-0690">Ribosome biogenesis</keyword>
<keyword id="KW-0698">rRNA processing</keyword>
<evidence type="ECO:0000255" key="1">
    <source>
        <dbReference type="HAMAP-Rule" id="MF_00014"/>
    </source>
</evidence>
<name>RIMM_BUCAP</name>
<accession>Q8K9F5</accession>
<organism>
    <name type="scientific">Buchnera aphidicola subsp. Schizaphis graminum (strain Sg)</name>
    <dbReference type="NCBI Taxonomy" id="198804"/>
    <lineage>
        <taxon>Bacteria</taxon>
        <taxon>Pseudomonadati</taxon>
        <taxon>Pseudomonadota</taxon>
        <taxon>Gammaproteobacteria</taxon>
        <taxon>Enterobacterales</taxon>
        <taxon>Erwiniaceae</taxon>
        <taxon>Buchnera</taxon>
    </lineage>
</organism>
<gene>
    <name evidence="1" type="primary">rimM</name>
    <name type="ordered locus">BUsg_382</name>
</gene>